<organism>
    <name type="scientific">Streptomyces griseus subsp. griseus (strain JCM 4626 / CBS 651.72 / NBRC 13350 / KCC S-0626 / ISP 5235)</name>
    <dbReference type="NCBI Taxonomy" id="455632"/>
    <lineage>
        <taxon>Bacteria</taxon>
        <taxon>Bacillati</taxon>
        <taxon>Actinomycetota</taxon>
        <taxon>Actinomycetes</taxon>
        <taxon>Kitasatosporales</taxon>
        <taxon>Streptomycetaceae</taxon>
        <taxon>Streptomyces</taxon>
    </lineage>
</organism>
<feature type="chain" id="PRO_0000389200" description="Non-homologous end joining protein Ku">
    <location>
        <begin position="1"/>
        <end position="395"/>
    </location>
</feature>
<feature type="domain" description="Ku" evidence="1">
    <location>
        <begin position="9"/>
        <end position="181"/>
    </location>
</feature>
<feature type="region of interest" description="Disordered" evidence="2">
    <location>
        <begin position="252"/>
        <end position="395"/>
    </location>
</feature>
<feature type="compositionally biased region" description="Polar residues" evidence="2">
    <location>
        <begin position="283"/>
        <end position="292"/>
    </location>
</feature>
<feature type="compositionally biased region" description="Polar residues" evidence="2">
    <location>
        <begin position="311"/>
        <end position="320"/>
    </location>
</feature>
<feature type="compositionally biased region" description="Basic residues" evidence="2">
    <location>
        <begin position="351"/>
        <end position="361"/>
    </location>
</feature>
<feature type="compositionally biased region" description="Low complexity" evidence="2">
    <location>
        <begin position="362"/>
        <end position="371"/>
    </location>
</feature>
<dbReference type="EMBL" id="AP009493">
    <property type="protein sequence ID" value="BAG19024.1"/>
    <property type="molecule type" value="Genomic_DNA"/>
</dbReference>
<dbReference type="RefSeq" id="WP_012379039.1">
    <property type="nucleotide sequence ID" value="NC_010572.1"/>
</dbReference>
<dbReference type="KEGG" id="sgr:SGR_2195"/>
<dbReference type="PATRIC" id="fig|455632.4.peg.2232"/>
<dbReference type="eggNOG" id="COG1273">
    <property type="taxonomic scope" value="Bacteria"/>
</dbReference>
<dbReference type="HOGENOM" id="CLU_048975_1_1_11"/>
<dbReference type="Proteomes" id="UP000001685">
    <property type="component" value="Chromosome"/>
</dbReference>
<dbReference type="GO" id="GO:0003690">
    <property type="term" value="F:double-stranded DNA binding"/>
    <property type="evidence" value="ECO:0007669"/>
    <property type="project" value="UniProtKB-UniRule"/>
</dbReference>
<dbReference type="GO" id="GO:0006310">
    <property type="term" value="P:DNA recombination"/>
    <property type="evidence" value="ECO:0007669"/>
    <property type="project" value="UniProtKB-KW"/>
</dbReference>
<dbReference type="GO" id="GO:0006303">
    <property type="term" value="P:double-strand break repair via nonhomologous end joining"/>
    <property type="evidence" value="ECO:0007669"/>
    <property type="project" value="UniProtKB-UniRule"/>
</dbReference>
<dbReference type="CDD" id="cd00789">
    <property type="entry name" value="KU_like"/>
    <property type="match status" value="1"/>
</dbReference>
<dbReference type="FunFam" id="2.40.290.10:FF:000004">
    <property type="entry name" value="Non-homologous end joining protein Ku"/>
    <property type="match status" value="1"/>
</dbReference>
<dbReference type="Gene3D" id="2.40.290.10">
    <property type="match status" value="1"/>
</dbReference>
<dbReference type="HAMAP" id="MF_01875">
    <property type="entry name" value="Prokaryotic_Ku"/>
    <property type="match status" value="1"/>
</dbReference>
<dbReference type="InterPro" id="IPR006164">
    <property type="entry name" value="Ku70/Ku80_beta-barrel_dom"/>
</dbReference>
<dbReference type="InterPro" id="IPR009187">
    <property type="entry name" value="Prok_Ku"/>
</dbReference>
<dbReference type="InterPro" id="IPR016194">
    <property type="entry name" value="SPOC-like_C_dom_sf"/>
</dbReference>
<dbReference type="NCBIfam" id="TIGR02772">
    <property type="entry name" value="Ku_bact"/>
    <property type="match status" value="1"/>
</dbReference>
<dbReference type="PANTHER" id="PTHR41251">
    <property type="entry name" value="NON-HOMOLOGOUS END JOINING PROTEIN KU"/>
    <property type="match status" value="1"/>
</dbReference>
<dbReference type="PANTHER" id="PTHR41251:SF1">
    <property type="entry name" value="NON-HOMOLOGOUS END JOINING PROTEIN KU"/>
    <property type="match status" value="1"/>
</dbReference>
<dbReference type="Pfam" id="PF02735">
    <property type="entry name" value="Ku"/>
    <property type="match status" value="1"/>
</dbReference>
<dbReference type="SMART" id="SM00559">
    <property type="entry name" value="Ku78"/>
    <property type="match status" value="1"/>
</dbReference>
<dbReference type="SUPFAM" id="SSF100939">
    <property type="entry name" value="SPOC domain-like"/>
    <property type="match status" value="1"/>
</dbReference>
<protein>
    <recommendedName>
        <fullName evidence="1">Non-homologous end joining protein Ku</fullName>
    </recommendedName>
</protein>
<accession>B1W0D5</accession>
<sequence>MRSIWNGAISFGLVSIPIKLVNATENHSISFRQIHLADGGRIRYRKVCELDEQEVSGSETGKAYEDADGTMIPITDEDLAQLPLPTAKTIEIVAFVPADRIDPLQMDAAYYLSANGVPAAKPYTLLREALKRSNRVAVAKYALRGRERLGMLRVVGEVIALHGLLWPDEIRPPEDAAPDGDITVRDAELDLADTLMSTLGEVDMDSLHDDYREAVEELAAAKASGESVPPAEPEDTGGEVIDLIAALENSVRAARTSRDDEGAGGDGGDMADVHPIGRGAKASSKTSGQSSGKAARTTKTARRTTHRTPTGKTVTRSGDSTAEKSAPKSSGAKKSTAKKSTAKKTAAQKTTARKTTAKKTTAKGTTGTTAAAKKRTSSGGGTAKKSASSRKRTSA</sequence>
<reference key="1">
    <citation type="journal article" date="2008" name="J. Bacteriol.">
        <title>Genome sequence of the streptomycin-producing microorganism Streptomyces griseus IFO 13350.</title>
        <authorList>
            <person name="Ohnishi Y."/>
            <person name="Ishikawa J."/>
            <person name="Hara H."/>
            <person name="Suzuki H."/>
            <person name="Ikenoya M."/>
            <person name="Ikeda H."/>
            <person name="Yamashita A."/>
            <person name="Hattori M."/>
            <person name="Horinouchi S."/>
        </authorList>
    </citation>
    <scope>NUCLEOTIDE SEQUENCE [LARGE SCALE GENOMIC DNA]</scope>
    <source>
        <strain>JCM 4626 / CBS 651.72 / NBRC 13350 / KCC S-0626 / ISP 5235</strain>
    </source>
</reference>
<evidence type="ECO:0000255" key="1">
    <source>
        <dbReference type="HAMAP-Rule" id="MF_01875"/>
    </source>
</evidence>
<evidence type="ECO:0000256" key="2">
    <source>
        <dbReference type="SAM" id="MobiDB-lite"/>
    </source>
</evidence>
<gene>
    <name evidence="1" type="primary">ku</name>
    <name type="ordered locus">SGR_2195</name>
</gene>
<keyword id="KW-0227">DNA damage</keyword>
<keyword id="KW-0233">DNA recombination</keyword>
<keyword id="KW-0234">DNA repair</keyword>
<keyword id="KW-0238">DNA-binding</keyword>
<name>KU_STRGG</name>
<comment type="function">
    <text evidence="1">With LigD forms a non-homologous end joining (NHEJ) DNA repair enzyme, which repairs dsDNA breaks with reduced fidelity. Binds linear dsDNA with 5'- and 3'- overhangs but not closed circular dsDNA nor ssDNA. Recruits and stimulates the ligase activity of LigD.</text>
</comment>
<comment type="subunit">
    <text evidence="1">Homodimer. Interacts with LigD.</text>
</comment>
<comment type="similarity">
    <text evidence="1">Belongs to the prokaryotic Ku family.</text>
</comment>
<proteinExistence type="inferred from homology"/>